<protein>
    <recommendedName>
        <fullName evidence="1">Homoserine kinase</fullName>
        <shortName evidence="1">HK</shortName>
        <shortName evidence="1">HSK</shortName>
        <ecNumber evidence="1">2.7.1.39</ecNumber>
    </recommendedName>
</protein>
<feature type="chain" id="PRO_1000134255" description="Homoserine kinase">
    <location>
        <begin position="1"/>
        <end position="315"/>
    </location>
</feature>
<feature type="binding site" evidence="1">
    <location>
        <begin position="96"/>
        <end position="106"/>
    </location>
    <ligand>
        <name>ATP</name>
        <dbReference type="ChEBI" id="CHEBI:30616"/>
    </ligand>
</feature>
<evidence type="ECO:0000255" key="1">
    <source>
        <dbReference type="HAMAP-Rule" id="MF_00384"/>
    </source>
</evidence>
<gene>
    <name evidence="1" type="primary">thrB</name>
    <name type="ordered locus">MLBr01131</name>
</gene>
<comment type="function">
    <text evidence="1">Catalyzes the ATP-dependent phosphorylation of L-homoserine to L-homoserine phosphate.</text>
</comment>
<comment type="catalytic activity">
    <reaction evidence="1">
        <text>L-homoserine + ATP = O-phospho-L-homoserine + ADP + H(+)</text>
        <dbReference type="Rhea" id="RHEA:13985"/>
        <dbReference type="ChEBI" id="CHEBI:15378"/>
        <dbReference type="ChEBI" id="CHEBI:30616"/>
        <dbReference type="ChEBI" id="CHEBI:57476"/>
        <dbReference type="ChEBI" id="CHEBI:57590"/>
        <dbReference type="ChEBI" id="CHEBI:456216"/>
        <dbReference type="EC" id="2.7.1.39"/>
    </reaction>
</comment>
<comment type="pathway">
    <text evidence="1">Amino-acid biosynthesis; L-threonine biosynthesis; L-threonine from L-aspartate: step 4/5.</text>
</comment>
<comment type="subcellular location">
    <subcellularLocation>
        <location evidence="1">Cytoplasm</location>
    </subcellularLocation>
</comment>
<comment type="similarity">
    <text evidence="1">Belongs to the GHMP kinase family. Homoserine kinase subfamily.</text>
</comment>
<organism>
    <name type="scientific">Mycobacterium leprae (strain Br4923)</name>
    <dbReference type="NCBI Taxonomy" id="561304"/>
    <lineage>
        <taxon>Bacteria</taxon>
        <taxon>Bacillati</taxon>
        <taxon>Actinomycetota</taxon>
        <taxon>Actinomycetes</taxon>
        <taxon>Mycobacteriales</taxon>
        <taxon>Mycobacteriaceae</taxon>
        <taxon>Mycobacterium</taxon>
    </lineage>
</organism>
<keyword id="KW-0028">Amino-acid biosynthesis</keyword>
<keyword id="KW-0067">ATP-binding</keyword>
<keyword id="KW-0963">Cytoplasm</keyword>
<keyword id="KW-0418">Kinase</keyword>
<keyword id="KW-0547">Nucleotide-binding</keyword>
<keyword id="KW-0791">Threonine biosynthesis</keyword>
<keyword id="KW-0808">Transferase</keyword>
<name>KHSE_MYCLB</name>
<reference key="1">
    <citation type="journal article" date="2009" name="Nat. Genet.">
        <title>Comparative genomic and phylogeographic analysis of Mycobacterium leprae.</title>
        <authorList>
            <person name="Monot M."/>
            <person name="Honore N."/>
            <person name="Garnier T."/>
            <person name="Zidane N."/>
            <person name="Sherafi D."/>
            <person name="Paniz-Mondolfi A."/>
            <person name="Matsuoka M."/>
            <person name="Taylor G.M."/>
            <person name="Donoghue H.D."/>
            <person name="Bouwman A."/>
            <person name="Mays S."/>
            <person name="Watson C."/>
            <person name="Lockwood D."/>
            <person name="Khamispour A."/>
            <person name="Dowlati Y."/>
            <person name="Jianping S."/>
            <person name="Rea T.H."/>
            <person name="Vera-Cabrera L."/>
            <person name="Stefani M.M."/>
            <person name="Banu S."/>
            <person name="Macdonald M."/>
            <person name="Sapkota B.R."/>
            <person name="Spencer J.S."/>
            <person name="Thomas J."/>
            <person name="Harshman K."/>
            <person name="Singh P."/>
            <person name="Busso P."/>
            <person name="Gattiker A."/>
            <person name="Rougemont J."/>
            <person name="Brennan P.J."/>
            <person name="Cole S.T."/>
        </authorList>
    </citation>
    <scope>NUCLEOTIDE SEQUENCE [LARGE SCALE GENOMIC DNA]</scope>
    <source>
        <strain>Br4923</strain>
    </source>
</reference>
<accession>B8ZR28</accession>
<proteinExistence type="inferred from homology"/>
<sequence>MVTWMLPAGLVASAVVAASSANLGPGFDSIGLALSLCDEIVVETTDSGLVVVVDGEGADQVPMGPEHLVVRAVRRGLQAVGVSAAGLVVRCRNAIPHSRGLGSSAAAVVGGLAVVNGFVAQIDSTPLSNAQLIQLASEFEGHPDNAAAAVLGGAVVSWVDRSYDQPDYCAVPLRLHPDIHLFAAIPEERSSTAESRVLLPARVSHDDARFNVSRAALLVVALTERPDLLMAATEDVLHQPHRASAMSASAEYLRLLRRHNVAATLSGAGPSLIALSTQSELPREAAEYGAANGFIIIKMTAGDEVCWRPEVTVPG</sequence>
<dbReference type="EC" id="2.7.1.39" evidence="1"/>
<dbReference type="EMBL" id="FM211192">
    <property type="protein sequence ID" value="CAR71226.1"/>
    <property type="molecule type" value="Genomic_DNA"/>
</dbReference>
<dbReference type="SMR" id="B8ZR28"/>
<dbReference type="KEGG" id="mlb:MLBr01131"/>
<dbReference type="HOGENOM" id="CLU_041243_0_1_11"/>
<dbReference type="UniPathway" id="UPA00050">
    <property type="reaction ID" value="UER00064"/>
</dbReference>
<dbReference type="Proteomes" id="UP000006900">
    <property type="component" value="Chromosome"/>
</dbReference>
<dbReference type="GO" id="GO:0005737">
    <property type="term" value="C:cytoplasm"/>
    <property type="evidence" value="ECO:0007669"/>
    <property type="project" value="UniProtKB-SubCell"/>
</dbReference>
<dbReference type="GO" id="GO:0005524">
    <property type="term" value="F:ATP binding"/>
    <property type="evidence" value="ECO:0007669"/>
    <property type="project" value="UniProtKB-UniRule"/>
</dbReference>
<dbReference type="GO" id="GO:0004413">
    <property type="term" value="F:homoserine kinase activity"/>
    <property type="evidence" value="ECO:0007669"/>
    <property type="project" value="UniProtKB-UniRule"/>
</dbReference>
<dbReference type="GO" id="GO:0009088">
    <property type="term" value="P:threonine biosynthetic process"/>
    <property type="evidence" value="ECO:0007669"/>
    <property type="project" value="UniProtKB-UniRule"/>
</dbReference>
<dbReference type="Gene3D" id="3.30.230.10">
    <property type="match status" value="1"/>
</dbReference>
<dbReference type="Gene3D" id="3.30.70.890">
    <property type="entry name" value="GHMP kinase, C-terminal domain"/>
    <property type="match status" value="1"/>
</dbReference>
<dbReference type="HAMAP" id="MF_00384">
    <property type="entry name" value="Homoser_kinase"/>
    <property type="match status" value="1"/>
</dbReference>
<dbReference type="InterPro" id="IPR013750">
    <property type="entry name" value="GHMP_kinase_C_dom"/>
</dbReference>
<dbReference type="InterPro" id="IPR036554">
    <property type="entry name" value="GHMP_kinase_C_sf"/>
</dbReference>
<dbReference type="InterPro" id="IPR006204">
    <property type="entry name" value="GHMP_kinase_N_dom"/>
</dbReference>
<dbReference type="InterPro" id="IPR006203">
    <property type="entry name" value="GHMP_knse_ATP-bd_CS"/>
</dbReference>
<dbReference type="InterPro" id="IPR000870">
    <property type="entry name" value="Homoserine_kinase"/>
</dbReference>
<dbReference type="InterPro" id="IPR020568">
    <property type="entry name" value="Ribosomal_Su5_D2-typ_SF"/>
</dbReference>
<dbReference type="InterPro" id="IPR014721">
    <property type="entry name" value="Ribsml_uS5_D2-typ_fold_subgr"/>
</dbReference>
<dbReference type="NCBIfam" id="TIGR00191">
    <property type="entry name" value="thrB"/>
    <property type="match status" value="1"/>
</dbReference>
<dbReference type="PANTHER" id="PTHR20861:SF1">
    <property type="entry name" value="HOMOSERINE KINASE"/>
    <property type="match status" value="1"/>
</dbReference>
<dbReference type="PANTHER" id="PTHR20861">
    <property type="entry name" value="HOMOSERINE/4-DIPHOSPHOCYTIDYL-2-C-METHYL-D-ERYTHRITOL KINASE"/>
    <property type="match status" value="1"/>
</dbReference>
<dbReference type="Pfam" id="PF08544">
    <property type="entry name" value="GHMP_kinases_C"/>
    <property type="match status" value="1"/>
</dbReference>
<dbReference type="Pfam" id="PF00288">
    <property type="entry name" value="GHMP_kinases_N"/>
    <property type="match status" value="1"/>
</dbReference>
<dbReference type="PIRSF" id="PIRSF000676">
    <property type="entry name" value="Homoser_kin"/>
    <property type="match status" value="1"/>
</dbReference>
<dbReference type="PRINTS" id="PR00958">
    <property type="entry name" value="HOMSERKINASE"/>
</dbReference>
<dbReference type="SUPFAM" id="SSF55060">
    <property type="entry name" value="GHMP Kinase, C-terminal domain"/>
    <property type="match status" value="1"/>
</dbReference>
<dbReference type="SUPFAM" id="SSF54211">
    <property type="entry name" value="Ribosomal protein S5 domain 2-like"/>
    <property type="match status" value="1"/>
</dbReference>
<dbReference type="PROSITE" id="PS00627">
    <property type="entry name" value="GHMP_KINASES_ATP"/>
    <property type="match status" value="1"/>
</dbReference>